<protein>
    <recommendedName>
        <fullName evidence="1">3-isopropylmalate dehydratase large subunit</fullName>
        <ecNumber evidence="1">4.2.1.33</ecNumber>
    </recommendedName>
    <alternativeName>
        <fullName evidence="1">Alpha-IPM isomerase</fullName>
        <shortName evidence="1">IPMI</shortName>
    </alternativeName>
    <alternativeName>
        <fullName evidence="1">Isopropylmalate isomerase</fullName>
    </alternativeName>
</protein>
<comment type="function">
    <text evidence="1">Catalyzes the isomerization between 2-isopropylmalate and 3-isopropylmalate, via the formation of 2-isopropylmaleate.</text>
</comment>
<comment type="catalytic activity">
    <reaction evidence="1">
        <text>(2R,3S)-3-isopropylmalate = (2S)-2-isopropylmalate</text>
        <dbReference type="Rhea" id="RHEA:32287"/>
        <dbReference type="ChEBI" id="CHEBI:1178"/>
        <dbReference type="ChEBI" id="CHEBI:35121"/>
        <dbReference type="EC" id="4.2.1.33"/>
    </reaction>
</comment>
<comment type="cofactor">
    <cofactor evidence="1">
        <name>[4Fe-4S] cluster</name>
        <dbReference type="ChEBI" id="CHEBI:49883"/>
    </cofactor>
    <text evidence="1">Binds 1 [4Fe-4S] cluster per subunit.</text>
</comment>
<comment type="pathway">
    <text evidence="1">Amino-acid biosynthesis; L-leucine biosynthesis; L-leucine from 3-methyl-2-oxobutanoate: step 2/4.</text>
</comment>
<comment type="subunit">
    <text evidence="1">Heterodimer of LeuC and LeuD.</text>
</comment>
<comment type="similarity">
    <text evidence="1">Belongs to the aconitase/IPM isomerase family. LeuC type 1 subfamily.</text>
</comment>
<accession>Q5LAB1</accession>
<evidence type="ECO:0000255" key="1">
    <source>
        <dbReference type="HAMAP-Rule" id="MF_01026"/>
    </source>
</evidence>
<feature type="chain" id="PRO_0000076703" description="3-isopropylmalate dehydratase large subunit">
    <location>
        <begin position="1"/>
        <end position="464"/>
    </location>
</feature>
<feature type="binding site" evidence="1">
    <location>
        <position position="345"/>
    </location>
    <ligand>
        <name>[4Fe-4S] cluster</name>
        <dbReference type="ChEBI" id="CHEBI:49883"/>
    </ligand>
</feature>
<feature type="binding site" evidence="1">
    <location>
        <position position="405"/>
    </location>
    <ligand>
        <name>[4Fe-4S] cluster</name>
        <dbReference type="ChEBI" id="CHEBI:49883"/>
    </ligand>
</feature>
<feature type="binding site" evidence="1">
    <location>
        <position position="408"/>
    </location>
    <ligand>
        <name>[4Fe-4S] cluster</name>
        <dbReference type="ChEBI" id="CHEBI:49883"/>
    </ligand>
</feature>
<reference key="1">
    <citation type="journal article" date="2005" name="Science">
        <title>Extensive DNA inversions in the B. fragilis genome control variable gene expression.</title>
        <authorList>
            <person name="Cerdeno-Tarraga A.-M."/>
            <person name="Patrick S."/>
            <person name="Crossman L.C."/>
            <person name="Blakely G."/>
            <person name="Abratt V."/>
            <person name="Lennard N."/>
            <person name="Poxton I."/>
            <person name="Duerden B."/>
            <person name="Harris B."/>
            <person name="Quail M.A."/>
            <person name="Barron A."/>
            <person name="Clark L."/>
            <person name="Corton C."/>
            <person name="Doggett J."/>
            <person name="Holden M.T.G."/>
            <person name="Larke N."/>
            <person name="Line A."/>
            <person name="Lord A."/>
            <person name="Norbertczak H."/>
            <person name="Ormond D."/>
            <person name="Price C."/>
            <person name="Rabbinowitsch E."/>
            <person name="Woodward J."/>
            <person name="Barrell B.G."/>
            <person name="Parkhill J."/>
        </authorList>
    </citation>
    <scope>NUCLEOTIDE SEQUENCE [LARGE SCALE GENOMIC DNA]</scope>
    <source>
        <strain>ATCC 25285 / DSM 2151 / CCUG 4856 / JCM 11019 / LMG 10263 / NCTC 9343 / Onslow / VPI 2553 / EN-2</strain>
    </source>
</reference>
<sequence length="464" mass="50523">MNTLFDKIWDAHVVTTVEDGPTQLYIDRLYCHEVTSPQAFAGLRARGIKVFRPEKVYCMPDHNTPTHDQDKPIEDPVSKTQVDTLTKNAADFGLTHYGMMDKRNGIIHVVGPERGLTLPGMTIVCGDSHTSTHGAMGAVAFGIGTSEVEMVLASQCILQSRPKTMRITVDGKLGKGVTAKDIALYMMSKMTTSGATGYFVEYAGEAIRSLTMEGRLTLCNLSIEMGARGGMIAPDEVTFEYIKGRENAPQGEEWDQAVQYWKTLKSEDDAVFDKEVHFDAADIEPMITYGTNPGMGMGITQHIPTTDGMNETTKASFLKSLDYMGFQPGEALLGKKIDYVFLGACTNGRIEDFRAFASIVKGHQKAEHVIAWLVPGSWMVDAQIREEGLDKILEDAGFAIRQPGCSACLAMNDDKIPAGKYSVSTSNRNFEGRQGPGARTLLASPLVAAAAAITGVIADPRELM</sequence>
<organism>
    <name type="scientific">Bacteroides fragilis (strain ATCC 25285 / DSM 2151 / CCUG 4856 / JCM 11019 / LMG 10263 / NCTC 9343 / Onslow / VPI 2553 / EN-2)</name>
    <dbReference type="NCBI Taxonomy" id="272559"/>
    <lineage>
        <taxon>Bacteria</taxon>
        <taxon>Pseudomonadati</taxon>
        <taxon>Bacteroidota</taxon>
        <taxon>Bacteroidia</taxon>
        <taxon>Bacteroidales</taxon>
        <taxon>Bacteroidaceae</taxon>
        <taxon>Bacteroides</taxon>
    </lineage>
</organism>
<dbReference type="EC" id="4.2.1.33" evidence="1"/>
<dbReference type="EMBL" id="CR626927">
    <property type="protein sequence ID" value="CAH08962.1"/>
    <property type="molecule type" value="Genomic_DNA"/>
</dbReference>
<dbReference type="RefSeq" id="WP_005799043.1">
    <property type="nucleotide sequence ID" value="NZ_UFTH01000001.1"/>
</dbReference>
<dbReference type="SMR" id="Q5LAB1"/>
<dbReference type="PaxDb" id="272559-BF9343_3181"/>
<dbReference type="DNASU" id="3289213"/>
<dbReference type="GeneID" id="60366965"/>
<dbReference type="KEGG" id="bfs:BF9343_3181"/>
<dbReference type="eggNOG" id="COG0065">
    <property type="taxonomic scope" value="Bacteria"/>
</dbReference>
<dbReference type="HOGENOM" id="CLU_006714_3_4_10"/>
<dbReference type="UniPathway" id="UPA00048">
    <property type="reaction ID" value="UER00071"/>
</dbReference>
<dbReference type="Proteomes" id="UP000006731">
    <property type="component" value="Chromosome"/>
</dbReference>
<dbReference type="GO" id="GO:0003861">
    <property type="term" value="F:3-isopropylmalate dehydratase activity"/>
    <property type="evidence" value="ECO:0007669"/>
    <property type="project" value="UniProtKB-UniRule"/>
</dbReference>
<dbReference type="GO" id="GO:0051539">
    <property type="term" value="F:4 iron, 4 sulfur cluster binding"/>
    <property type="evidence" value="ECO:0007669"/>
    <property type="project" value="UniProtKB-KW"/>
</dbReference>
<dbReference type="GO" id="GO:0046872">
    <property type="term" value="F:metal ion binding"/>
    <property type="evidence" value="ECO:0007669"/>
    <property type="project" value="UniProtKB-KW"/>
</dbReference>
<dbReference type="GO" id="GO:0009098">
    <property type="term" value="P:L-leucine biosynthetic process"/>
    <property type="evidence" value="ECO:0007669"/>
    <property type="project" value="UniProtKB-UniRule"/>
</dbReference>
<dbReference type="CDD" id="cd01583">
    <property type="entry name" value="IPMI"/>
    <property type="match status" value="1"/>
</dbReference>
<dbReference type="Gene3D" id="3.30.499.10">
    <property type="entry name" value="Aconitase, domain 3"/>
    <property type="match status" value="2"/>
</dbReference>
<dbReference type="HAMAP" id="MF_01026">
    <property type="entry name" value="LeuC_type1"/>
    <property type="match status" value="1"/>
</dbReference>
<dbReference type="InterPro" id="IPR004430">
    <property type="entry name" value="3-IsopropMal_deHydase_lsu"/>
</dbReference>
<dbReference type="InterPro" id="IPR015931">
    <property type="entry name" value="Acnase/IPM_dHydase_lsu_aba_1/3"/>
</dbReference>
<dbReference type="InterPro" id="IPR001030">
    <property type="entry name" value="Acoase/IPM_deHydtase_lsu_aba"/>
</dbReference>
<dbReference type="InterPro" id="IPR018136">
    <property type="entry name" value="Aconitase_4Fe-4S_BS"/>
</dbReference>
<dbReference type="InterPro" id="IPR036008">
    <property type="entry name" value="Aconitase_4Fe-4S_dom"/>
</dbReference>
<dbReference type="InterPro" id="IPR050067">
    <property type="entry name" value="IPM_dehydratase_rel_enz"/>
</dbReference>
<dbReference type="InterPro" id="IPR033941">
    <property type="entry name" value="IPMI_cat"/>
</dbReference>
<dbReference type="NCBIfam" id="TIGR00170">
    <property type="entry name" value="leuC"/>
    <property type="match status" value="1"/>
</dbReference>
<dbReference type="NCBIfam" id="NF004016">
    <property type="entry name" value="PRK05478.1"/>
    <property type="match status" value="1"/>
</dbReference>
<dbReference type="NCBIfam" id="NF009116">
    <property type="entry name" value="PRK12466.1"/>
    <property type="match status" value="1"/>
</dbReference>
<dbReference type="PANTHER" id="PTHR43822:SF9">
    <property type="entry name" value="3-ISOPROPYLMALATE DEHYDRATASE"/>
    <property type="match status" value="1"/>
</dbReference>
<dbReference type="PANTHER" id="PTHR43822">
    <property type="entry name" value="HOMOACONITASE, MITOCHONDRIAL-RELATED"/>
    <property type="match status" value="1"/>
</dbReference>
<dbReference type="Pfam" id="PF00330">
    <property type="entry name" value="Aconitase"/>
    <property type="match status" value="1"/>
</dbReference>
<dbReference type="PRINTS" id="PR00415">
    <property type="entry name" value="ACONITASE"/>
</dbReference>
<dbReference type="SUPFAM" id="SSF53732">
    <property type="entry name" value="Aconitase iron-sulfur domain"/>
    <property type="match status" value="1"/>
</dbReference>
<dbReference type="PROSITE" id="PS01244">
    <property type="entry name" value="ACONITASE_2"/>
    <property type="match status" value="1"/>
</dbReference>
<gene>
    <name evidence="1" type="primary">leuC</name>
    <name type="ordered locus">BF3266</name>
</gene>
<proteinExistence type="inferred from homology"/>
<keyword id="KW-0004">4Fe-4S</keyword>
<keyword id="KW-0028">Amino-acid biosynthesis</keyword>
<keyword id="KW-0100">Branched-chain amino acid biosynthesis</keyword>
<keyword id="KW-0408">Iron</keyword>
<keyword id="KW-0411">Iron-sulfur</keyword>
<keyword id="KW-0432">Leucine biosynthesis</keyword>
<keyword id="KW-0456">Lyase</keyword>
<keyword id="KW-0479">Metal-binding</keyword>
<name>LEUC_BACFN</name>